<dbReference type="EMBL" id="CP000512">
    <property type="protein sequence ID" value="ABM31764.1"/>
    <property type="molecule type" value="Genomic_DNA"/>
</dbReference>
<dbReference type="RefSeq" id="WP_011794317.1">
    <property type="nucleotide sequence ID" value="NC_008752.1"/>
</dbReference>
<dbReference type="SMR" id="A1TLC6"/>
<dbReference type="STRING" id="397945.Aave_1172"/>
<dbReference type="GeneID" id="79790831"/>
<dbReference type="KEGG" id="aav:Aave_1172"/>
<dbReference type="eggNOG" id="COG3022">
    <property type="taxonomic scope" value="Bacteria"/>
</dbReference>
<dbReference type="HOGENOM" id="CLU_061989_0_0_4"/>
<dbReference type="OrthoDB" id="9777133at2"/>
<dbReference type="Proteomes" id="UP000002596">
    <property type="component" value="Chromosome"/>
</dbReference>
<dbReference type="GO" id="GO:0005829">
    <property type="term" value="C:cytosol"/>
    <property type="evidence" value="ECO:0007669"/>
    <property type="project" value="TreeGrafter"/>
</dbReference>
<dbReference type="GO" id="GO:0033194">
    <property type="term" value="P:response to hydroperoxide"/>
    <property type="evidence" value="ECO:0007669"/>
    <property type="project" value="TreeGrafter"/>
</dbReference>
<dbReference type="HAMAP" id="MF_00652">
    <property type="entry name" value="UPF0246"/>
    <property type="match status" value="1"/>
</dbReference>
<dbReference type="InterPro" id="IPR005583">
    <property type="entry name" value="YaaA"/>
</dbReference>
<dbReference type="NCBIfam" id="NF002542">
    <property type="entry name" value="PRK02101.1-3"/>
    <property type="match status" value="1"/>
</dbReference>
<dbReference type="PANTHER" id="PTHR30283:SF4">
    <property type="entry name" value="PEROXIDE STRESS RESISTANCE PROTEIN YAAA"/>
    <property type="match status" value="1"/>
</dbReference>
<dbReference type="PANTHER" id="PTHR30283">
    <property type="entry name" value="PEROXIDE STRESS RESPONSE PROTEIN YAAA"/>
    <property type="match status" value="1"/>
</dbReference>
<dbReference type="Pfam" id="PF03883">
    <property type="entry name" value="H2O2_YaaD"/>
    <property type="match status" value="1"/>
</dbReference>
<accession>A1TLC6</accession>
<protein>
    <recommendedName>
        <fullName evidence="1">UPF0246 protein Aave_1172</fullName>
    </recommendedName>
</protein>
<reference key="1">
    <citation type="submission" date="2006-12" db="EMBL/GenBank/DDBJ databases">
        <title>Complete sequence of Acidovorax avenae subsp. citrulli AAC00-1.</title>
        <authorList>
            <person name="Copeland A."/>
            <person name="Lucas S."/>
            <person name="Lapidus A."/>
            <person name="Barry K."/>
            <person name="Detter J.C."/>
            <person name="Glavina del Rio T."/>
            <person name="Dalin E."/>
            <person name="Tice H."/>
            <person name="Pitluck S."/>
            <person name="Kiss H."/>
            <person name="Brettin T."/>
            <person name="Bruce D."/>
            <person name="Han C."/>
            <person name="Tapia R."/>
            <person name="Gilna P."/>
            <person name="Schmutz J."/>
            <person name="Larimer F."/>
            <person name="Land M."/>
            <person name="Hauser L."/>
            <person name="Kyrpides N."/>
            <person name="Kim E."/>
            <person name="Stahl D."/>
            <person name="Richardson P."/>
        </authorList>
    </citation>
    <scope>NUCLEOTIDE SEQUENCE [LARGE SCALE GENOMIC DNA]</scope>
    <source>
        <strain>AAC00-1</strain>
    </source>
</reference>
<sequence length="259" mass="28752">MLFLLSPAKSLDYDTPLPPGLAHTLPPFIHESTQLIEVLREKSPQELASLMGISDALAGLNAARYAAWSPRFTAANARQALFAFNGDVYEGLDARSLDGDGLRWAQDHVAILSGLYGVLRPLDRMQPYRLEMGTRLATGAGANLYRFWGKRIAEHLNQRLAADATPVVVNLASQEYFKSVDTAALKARVIECVFEDWKGGRYKIISFHAKRARGLMARYAIQHRVVAPRQLEGFDLEGYAFDASASAQDRLVFRRKDAG</sequence>
<proteinExistence type="inferred from homology"/>
<comment type="similarity">
    <text evidence="1">Belongs to the UPF0246 family.</text>
</comment>
<name>Y1172_PARC0</name>
<evidence type="ECO:0000255" key="1">
    <source>
        <dbReference type="HAMAP-Rule" id="MF_00652"/>
    </source>
</evidence>
<organism>
    <name type="scientific">Paracidovorax citrulli (strain AAC00-1)</name>
    <name type="common">Acidovorax citrulli</name>
    <dbReference type="NCBI Taxonomy" id="397945"/>
    <lineage>
        <taxon>Bacteria</taxon>
        <taxon>Pseudomonadati</taxon>
        <taxon>Pseudomonadota</taxon>
        <taxon>Betaproteobacteria</taxon>
        <taxon>Burkholderiales</taxon>
        <taxon>Comamonadaceae</taxon>
        <taxon>Paracidovorax</taxon>
    </lineage>
</organism>
<feature type="chain" id="PRO_1000061581" description="UPF0246 protein Aave_1172">
    <location>
        <begin position="1"/>
        <end position="259"/>
    </location>
</feature>
<gene>
    <name type="ordered locus">Aave_1172</name>
</gene>